<proteinExistence type="inferred from homology"/>
<accession>Q73TE9</accession>
<feature type="chain" id="PRO_0000356553" description="Large ribosomal subunit protein bL33A">
    <location>
        <begin position="1"/>
        <end position="54"/>
    </location>
</feature>
<gene>
    <name evidence="1" type="primary">rpmG1</name>
    <name type="ordered locus">MAP_3769c</name>
</gene>
<evidence type="ECO:0000255" key="1">
    <source>
        <dbReference type="HAMAP-Rule" id="MF_00294"/>
    </source>
</evidence>
<comment type="similarity">
    <text evidence="1">Belongs to the bacterial ribosomal protein bL33 family.</text>
</comment>
<sequence length="54" mass="6614">MARNEIRPLVKLRSTAGTGYTYITRKNRRNDPDRLVLRKYDPVIRRHVEFREER</sequence>
<dbReference type="EMBL" id="AE016958">
    <property type="protein sequence ID" value="AAS06319.1"/>
    <property type="molecule type" value="Genomic_DNA"/>
</dbReference>
<dbReference type="SMR" id="Q73TE9"/>
<dbReference type="STRING" id="262316.MAP_3769c"/>
<dbReference type="KEGG" id="mpa:MAP_3769c"/>
<dbReference type="eggNOG" id="COG0267">
    <property type="taxonomic scope" value="Bacteria"/>
</dbReference>
<dbReference type="HOGENOM" id="CLU_190949_1_1_11"/>
<dbReference type="Proteomes" id="UP000000580">
    <property type="component" value="Chromosome"/>
</dbReference>
<dbReference type="GO" id="GO:0022625">
    <property type="term" value="C:cytosolic large ribosomal subunit"/>
    <property type="evidence" value="ECO:0007669"/>
    <property type="project" value="TreeGrafter"/>
</dbReference>
<dbReference type="GO" id="GO:0003735">
    <property type="term" value="F:structural constituent of ribosome"/>
    <property type="evidence" value="ECO:0007669"/>
    <property type="project" value="InterPro"/>
</dbReference>
<dbReference type="GO" id="GO:0006412">
    <property type="term" value="P:translation"/>
    <property type="evidence" value="ECO:0007669"/>
    <property type="project" value="UniProtKB-UniRule"/>
</dbReference>
<dbReference type="FunFam" id="2.20.28.120:FF:000002">
    <property type="entry name" value="50S ribosomal protein L33"/>
    <property type="match status" value="1"/>
</dbReference>
<dbReference type="Gene3D" id="2.20.28.120">
    <property type="entry name" value="Ribosomal protein L33"/>
    <property type="match status" value="1"/>
</dbReference>
<dbReference type="HAMAP" id="MF_00294">
    <property type="entry name" value="Ribosomal_bL33"/>
    <property type="match status" value="1"/>
</dbReference>
<dbReference type="InterPro" id="IPR001705">
    <property type="entry name" value="Ribosomal_bL33"/>
</dbReference>
<dbReference type="InterPro" id="IPR018264">
    <property type="entry name" value="Ribosomal_bL33_CS"/>
</dbReference>
<dbReference type="InterPro" id="IPR038584">
    <property type="entry name" value="Ribosomal_bL33_sf"/>
</dbReference>
<dbReference type="InterPro" id="IPR011332">
    <property type="entry name" value="Ribosomal_zn-bd"/>
</dbReference>
<dbReference type="NCBIfam" id="NF001860">
    <property type="entry name" value="PRK00595.1"/>
    <property type="match status" value="1"/>
</dbReference>
<dbReference type="NCBIfam" id="TIGR01023">
    <property type="entry name" value="rpmG_bact"/>
    <property type="match status" value="1"/>
</dbReference>
<dbReference type="PANTHER" id="PTHR15238">
    <property type="entry name" value="54S RIBOSOMAL PROTEIN L39, MITOCHONDRIAL"/>
    <property type="match status" value="1"/>
</dbReference>
<dbReference type="PANTHER" id="PTHR15238:SF1">
    <property type="entry name" value="LARGE RIBOSOMAL SUBUNIT PROTEIN BL33M"/>
    <property type="match status" value="1"/>
</dbReference>
<dbReference type="Pfam" id="PF00471">
    <property type="entry name" value="Ribosomal_L33"/>
    <property type="match status" value="1"/>
</dbReference>
<dbReference type="SUPFAM" id="SSF57829">
    <property type="entry name" value="Zn-binding ribosomal proteins"/>
    <property type="match status" value="1"/>
</dbReference>
<dbReference type="PROSITE" id="PS00582">
    <property type="entry name" value="RIBOSOMAL_L33"/>
    <property type="match status" value="1"/>
</dbReference>
<protein>
    <recommendedName>
        <fullName evidence="1">Large ribosomal subunit protein bL33A</fullName>
    </recommendedName>
    <alternativeName>
        <fullName evidence="1">50S ribosomal protein L33 1</fullName>
    </alternativeName>
</protein>
<reference key="1">
    <citation type="journal article" date="2005" name="Proc. Natl. Acad. Sci. U.S.A.">
        <title>The complete genome sequence of Mycobacterium avium subspecies paratuberculosis.</title>
        <authorList>
            <person name="Li L."/>
            <person name="Bannantine J.P."/>
            <person name="Zhang Q."/>
            <person name="Amonsin A."/>
            <person name="May B.J."/>
            <person name="Alt D."/>
            <person name="Banerji N."/>
            <person name="Kanjilal S."/>
            <person name="Kapur V."/>
        </authorList>
    </citation>
    <scope>NUCLEOTIDE SEQUENCE [LARGE SCALE GENOMIC DNA]</scope>
    <source>
        <strain>ATCC BAA-968 / K-10</strain>
    </source>
</reference>
<name>RL331_MYCPA</name>
<keyword id="KW-1185">Reference proteome</keyword>
<keyword id="KW-0687">Ribonucleoprotein</keyword>
<keyword id="KW-0689">Ribosomal protein</keyword>
<organism>
    <name type="scientific">Mycolicibacterium paratuberculosis (strain ATCC BAA-968 / K-10)</name>
    <name type="common">Mycobacterium paratuberculosis</name>
    <dbReference type="NCBI Taxonomy" id="262316"/>
    <lineage>
        <taxon>Bacteria</taxon>
        <taxon>Bacillati</taxon>
        <taxon>Actinomycetota</taxon>
        <taxon>Actinomycetes</taxon>
        <taxon>Mycobacteriales</taxon>
        <taxon>Mycobacteriaceae</taxon>
        <taxon>Mycobacterium</taxon>
        <taxon>Mycobacterium avium complex (MAC)</taxon>
    </lineage>
</organism>